<comment type="function">
    <text evidence="1">Catalyzes the interconversion of beta-pyran and beta-furan forms of D-ribose.</text>
</comment>
<comment type="catalytic activity">
    <reaction evidence="1">
        <text>beta-D-ribopyranose = beta-D-ribofuranose</text>
        <dbReference type="Rhea" id="RHEA:25432"/>
        <dbReference type="ChEBI" id="CHEBI:27476"/>
        <dbReference type="ChEBI" id="CHEBI:47002"/>
        <dbReference type="EC" id="5.4.99.62"/>
    </reaction>
</comment>
<comment type="pathway">
    <text evidence="1">Carbohydrate metabolism; D-ribose degradation; D-ribose 5-phosphate from beta-D-ribopyranose: step 1/2.</text>
</comment>
<comment type="subunit">
    <text evidence="1">Homodecamer.</text>
</comment>
<comment type="subcellular location">
    <subcellularLocation>
        <location evidence="1">Cytoplasm</location>
    </subcellularLocation>
</comment>
<comment type="similarity">
    <text evidence="1">Belongs to the RbsD / FucU family. RbsD subfamily.</text>
</comment>
<comment type="sequence caution" evidence="2">
    <conflict type="erroneous initiation">
        <sequence resource="EMBL-CDS" id="AAF96041"/>
    </conflict>
</comment>
<sequence length="139" mass="15356">MKKSTLLNSELSYLVATLGHTDEITICDAGLPIPDEVTRIDLALTHGVPSFLETVRVILSESQIESVIVAQEFAQVSPVLHEALYRELKAEEQLCGKPIAIQYISHEAFKQRTLQSRAVVRTGECTPYANVIFQAGVVF</sequence>
<reference key="1">
    <citation type="journal article" date="2000" name="Nature">
        <title>DNA sequence of both chromosomes of the cholera pathogen Vibrio cholerae.</title>
        <authorList>
            <person name="Heidelberg J.F."/>
            <person name="Eisen J.A."/>
            <person name="Nelson W.C."/>
            <person name="Clayton R.A."/>
            <person name="Gwinn M.L."/>
            <person name="Dodson R.J."/>
            <person name="Haft D.H."/>
            <person name="Hickey E.K."/>
            <person name="Peterson J.D."/>
            <person name="Umayam L.A."/>
            <person name="Gill S.R."/>
            <person name="Nelson K.E."/>
            <person name="Read T.D."/>
            <person name="Tettelin H."/>
            <person name="Richardson D.L."/>
            <person name="Ermolaeva M.D."/>
            <person name="Vamathevan J.J."/>
            <person name="Bass S."/>
            <person name="Qin H."/>
            <person name="Dragoi I."/>
            <person name="Sellers P."/>
            <person name="McDonald L.A."/>
            <person name="Utterback T.R."/>
            <person name="Fleischmann R.D."/>
            <person name="Nierman W.C."/>
            <person name="White O."/>
            <person name="Salzberg S.L."/>
            <person name="Smith H.O."/>
            <person name="Colwell R.R."/>
            <person name="Mekalanos J.J."/>
            <person name="Venter J.C."/>
            <person name="Fraser C.M."/>
        </authorList>
    </citation>
    <scope>NUCLEOTIDE SEQUENCE [LARGE SCALE GENOMIC DNA]</scope>
    <source>
        <strain>ATCC 39315 / El Tor Inaba N16961</strain>
    </source>
</reference>
<gene>
    <name evidence="1" type="primary">rbsD</name>
    <name type="ordered locus">VC_A0127</name>
</gene>
<accession>Q9KN38</accession>
<name>RBSD_VIBCH</name>
<keyword id="KW-0119">Carbohydrate metabolism</keyword>
<keyword id="KW-0963">Cytoplasm</keyword>
<keyword id="KW-0413">Isomerase</keyword>
<keyword id="KW-1185">Reference proteome</keyword>
<proteinExistence type="inferred from homology"/>
<dbReference type="EC" id="5.4.99.62" evidence="1"/>
<dbReference type="EMBL" id="AE003853">
    <property type="protein sequence ID" value="AAF96041.1"/>
    <property type="status" value="ALT_INIT"/>
    <property type="molecule type" value="Genomic_DNA"/>
</dbReference>
<dbReference type="PIR" id="H82496">
    <property type="entry name" value="H82496"/>
</dbReference>
<dbReference type="RefSeq" id="NP_232528.2">
    <property type="nucleotide sequence ID" value="NC_002506.1"/>
</dbReference>
<dbReference type="RefSeq" id="WP_001911632.1">
    <property type="nucleotide sequence ID" value="NZ_LT906615.1"/>
</dbReference>
<dbReference type="SMR" id="Q9KN38"/>
<dbReference type="STRING" id="243277.VC_A0127"/>
<dbReference type="DNASU" id="2612601"/>
<dbReference type="EnsemblBacteria" id="AAF96041">
    <property type="protein sequence ID" value="AAF96041"/>
    <property type="gene ID" value="VC_A0127"/>
</dbReference>
<dbReference type="KEGG" id="vch:VC_A0127"/>
<dbReference type="PATRIC" id="fig|243277.26.peg.2766"/>
<dbReference type="eggNOG" id="COG1869">
    <property type="taxonomic scope" value="Bacteria"/>
</dbReference>
<dbReference type="HOGENOM" id="CLU_135498_0_0_6"/>
<dbReference type="UniPathway" id="UPA00916">
    <property type="reaction ID" value="UER00888"/>
</dbReference>
<dbReference type="Proteomes" id="UP000000584">
    <property type="component" value="Chromosome 2"/>
</dbReference>
<dbReference type="GO" id="GO:0005829">
    <property type="term" value="C:cytosol"/>
    <property type="evidence" value="ECO:0000318"/>
    <property type="project" value="GO_Central"/>
</dbReference>
<dbReference type="GO" id="GO:0062193">
    <property type="term" value="F:D-ribose pyranase activity"/>
    <property type="evidence" value="ECO:0007669"/>
    <property type="project" value="UniProtKB-EC"/>
</dbReference>
<dbReference type="GO" id="GO:0016872">
    <property type="term" value="F:intramolecular lyase activity"/>
    <property type="evidence" value="ECO:0007669"/>
    <property type="project" value="UniProtKB-UniRule"/>
</dbReference>
<dbReference type="GO" id="GO:0016866">
    <property type="term" value="F:intramolecular transferase activity"/>
    <property type="evidence" value="ECO:0000318"/>
    <property type="project" value="GO_Central"/>
</dbReference>
<dbReference type="GO" id="GO:0048029">
    <property type="term" value="F:monosaccharide binding"/>
    <property type="evidence" value="ECO:0007669"/>
    <property type="project" value="InterPro"/>
</dbReference>
<dbReference type="GO" id="GO:0019303">
    <property type="term" value="P:D-ribose catabolic process"/>
    <property type="evidence" value="ECO:0000318"/>
    <property type="project" value="GO_Central"/>
</dbReference>
<dbReference type="Gene3D" id="3.40.1650.10">
    <property type="entry name" value="RbsD-like domain"/>
    <property type="match status" value="1"/>
</dbReference>
<dbReference type="HAMAP" id="MF_01661">
    <property type="entry name" value="D_rib_pyranase"/>
    <property type="match status" value="1"/>
</dbReference>
<dbReference type="InterPro" id="IPR023064">
    <property type="entry name" value="D-ribose_pyranase"/>
</dbReference>
<dbReference type="InterPro" id="IPR023750">
    <property type="entry name" value="RbsD-like_sf"/>
</dbReference>
<dbReference type="InterPro" id="IPR007721">
    <property type="entry name" value="RbsD_FucU"/>
</dbReference>
<dbReference type="NCBIfam" id="NF008761">
    <property type="entry name" value="PRK11797.1"/>
    <property type="match status" value="1"/>
</dbReference>
<dbReference type="PANTHER" id="PTHR37831">
    <property type="entry name" value="D-RIBOSE PYRANASE"/>
    <property type="match status" value="1"/>
</dbReference>
<dbReference type="PANTHER" id="PTHR37831:SF1">
    <property type="entry name" value="D-RIBOSE PYRANASE"/>
    <property type="match status" value="1"/>
</dbReference>
<dbReference type="Pfam" id="PF05025">
    <property type="entry name" value="RbsD_FucU"/>
    <property type="match status" value="1"/>
</dbReference>
<dbReference type="SUPFAM" id="SSF102546">
    <property type="entry name" value="RbsD-like"/>
    <property type="match status" value="1"/>
</dbReference>
<feature type="chain" id="PRO_0000346293" description="D-ribose pyranase">
    <location>
        <begin position="1"/>
        <end position="139"/>
    </location>
</feature>
<feature type="active site" description="Proton donor" evidence="1">
    <location>
        <position position="20"/>
    </location>
</feature>
<feature type="binding site" evidence="1">
    <location>
        <position position="28"/>
    </location>
    <ligand>
        <name>substrate</name>
    </ligand>
</feature>
<feature type="binding site" evidence="1">
    <location>
        <position position="106"/>
    </location>
    <ligand>
        <name>substrate</name>
    </ligand>
</feature>
<feature type="binding site" evidence="1">
    <location>
        <begin position="128"/>
        <end position="130"/>
    </location>
    <ligand>
        <name>substrate</name>
    </ligand>
</feature>
<evidence type="ECO:0000255" key="1">
    <source>
        <dbReference type="HAMAP-Rule" id="MF_01661"/>
    </source>
</evidence>
<evidence type="ECO:0000305" key="2"/>
<protein>
    <recommendedName>
        <fullName evidence="1">D-ribose pyranase</fullName>
        <ecNumber evidence="1">5.4.99.62</ecNumber>
    </recommendedName>
</protein>
<organism>
    <name type="scientific">Vibrio cholerae serotype O1 (strain ATCC 39315 / El Tor Inaba N16961)</name>
    <dbReference type="NCBI Taxonomy" id="243277"/>
    <lineage>
        <taxon>Bacteria</taxon>
        <taxon>Pseudomonadati</taxon>
        <taxon>Pseudomonadota</taxon>
        <taxon>Gammaproteobacteria</taxon>
        <taxon>Vibrionales</taxon>
        <taxon>Vibrionaceae</taxon>
        <taxon>Vibrio</taxon>
    </lineage>
</organism>